<accession>O65174</accession>
<proteinExistence type="evidence at transcript level"/>
<sequence>MVKAVAVLTGSEGVQGTVFFAQEGEGPTTITGSLSGLKPGLHGFHVHALGDTTNGCMSTGPHFNPAGKEHGAPEDGNRHAGDLGNVTVGEDGTVNFTVTDSQIPLTGLNSVVGRAVVVHADSDDLGKGGHELSKTTGNAGGRLACGVIGLQA</sequence>
<feature type="chain" id="PRO_0000164159" description="Superoxide dismutase [Cu-Zn]">
    <location>
        <begin position="1"/>
        <end position="152"/>
    </location>
</feature>
<feature type="binding site" evidence="1">
    <location>
        <position position="45"/>
    </location>
    <ligand>
        <name>Cu cation</name>
        <dbReference type="ChEBI" id="CHEBI:23378"/>
        <note>catalytic</note>
    </ligand>
</feature>
<feature type="binding site" evidence="1">
    <location>
        <position position="47"/>
    </location>
    <ligand>
        <name>Cu cation</name>
        <dbReference type="ChEBI" id="CHEBI:23378"/>
        <note>catalytic</note>
    </ligand>
</feature>
<feature type="binding site" evidence="1">
    <location>
        <position position="62"/>
    </location>
    <ligand>
        <name>Cu cation</name>
        <dbReference type="ChEBI" id="CHEBI:23378"/>
        <note>catalytic</note>
    </ligand>
</feature>
<feature type="binding site" evidence="1">
    <location>
        <position position="62"/>
    </location>
    <ligand>
        <name>Zn(2+)</name>
        <dbReference type="ChEBI" id="CHEBI:29105"/>
        <note>structural</note>
    </ligand>
</feature>
<feature type="binding site" evidence="1">
    <location>
        <position position="70"/>
    </location>
    <ligand>
        <name>Zn(2+)</name>
        <dbReference type="ChEBI" id="CHEBI:29105"/>
        <note>structural</note>
    </ligand>
</feature>
<feature type="binding site" evidence="1">
    <location>
        <position position="79"/>
    </location>
    <ligand>
        <name>Zn(2+)</name>
        <dbReference type="ChEBI" id="CHEBI:29105"/>
        <note>structural</note>
    </ligand>
</feature>
<feature type="binding site" evidence="1">
    <location>
        <position position="82"/>
    </location>
    <ligand>
        <name>Zn(2+)</name>
        <dbReference type="ChEBI" id="CHEBI:29105"/>
        <note>structural</note>
    </ligand>
</feature>
<feature type="binding site" evidence="1">
    <location>
        <position position="119"/>
    </location>
    <ligand>
        <name>Cu cation</name>
        <dbReference type="ChEBI" id="CHEBI:23378"/>
        <note>catalytic</note>
    </ligand>
</feature>
<feature type="disulfide bond" evidence="1">
    <location>
        <begin position="56"/>
        <end position="145"/>
    </location>
</feature>
<evidence type="ECO:0000250" key="1"/>
<evidence type="ECO:0000305" key="2"/>
<comment type="function">
    <text>Destroys radicals which are normally produced within the cells and which are toxic to biological systems.</text>
</comment>
<comment type="catalytic activity">
    <reaction>
        <text>2 superoxide + 2 H(+) = H2O2 + O2</text>
        <dbReference type="Rhea" id="RHEA:20696"/>
        <dbReference type="ChEBI" id="CHEBI:15378"/>
        <dbReference type="ChEBI" id="CHEBI:15379"/>
        <dbReference type="ChEBI" id="CHEBI:16240"/>
        <dbReference type="ChEBI" id="CHEBI:18421"/>
        <dbReference type="EC" id="1.15.1.1"/>
    </reaction>
</comment>
<comment type="cofactor">
    <cofactor evidence="1">
        <name>Cu cation</name>
        <dbReference type="ChEBI" id="CHEBI:23378"/>
    </cofactor>
    <text evidence="1">Binds 1 copper ion per subunit.</text>
</comment>
<comment type="cofactor">
    <cofactor evidence="1">
        <name>Zn(2+)</name>
        <dbReference type="ChEBI" id="CHEBI:29105"/>
    </cofactor>
    <text evidence="1">Binds 1 zinc ion per subunit.</text>
</comment>
<comment type="subunit">
    <text evidence="1">Homodimer.</text>
</comment>
<comment type="subcellular location">
    <subcellularLocation>
        <location>Cytoplasm</location>
    </subcellularLocation>
</comment>
<comment type="similarity">
    <text evidence="2">Belongs to the Cu-Zn superoxide dismutase family.</text>
</comment>
<keyword id="KW-0049">Antioxidant</keyword>
<keyword id="KW-0186">Copper</keyword>
<keyword id="KW-0963">Cytoplasm</keyword>
<keyword id="KW-1015">Disulfide bond</keyword>
<keyword id="KW-0479">Metal-binding</keyword>
<keyword id="KW-0560">Oxidoreductase</keyword>
<keyword id="KW-0862">Zinc</keyword>
<dbReference type="EC" id="1.15.1.1"/>
<dbReference type="EMBL" id="AF054150">
    <property type="protein sequence ID" value="AAC08581.1"/>
    <property type="molecule type" value="mRNA"/>
</dbReference>
<dbReference type="SMR" id="O65174"/>
<dbReference type="GO" id="GO:0005737">
    <property type="term" value="C:cytoplasm"/>
    <property type="evidence" value="ECO:0007669"/>
    <property type="project" value="UniProtKB-SubCell"/>
</dbReference>
<dbReference type="GO" id="GO:0005507">
    <property type="term" value="F:copper ion binding"/>
    <property type="evidence" value="ECO:0007669"/>
    <property type="project" value="InterPro"/>
</dbReference>
<dbReference type="GO" id="GO:0004784">
    <property type="term" value="F:superoxide dismutase activity"/>
    <property type="evidence" value="ECO:0007669"/>
    <property type="project" value="UniProtKB-EC"/>
</dbReference>
<dbReference type="CDD" id="cd00305">
    <property type="entry name" value="Cu-Zn_Superoxide_Dismutase"/>
    <property type="match status" value="1"/>
</dbReference>
<dbReference type="FunFam" id="2.60.40.200:FF:000001">
    <property type="entry name" value="Superoxide dismutase [Cu-Zn]"/>
    <property type="match status" value="1"/>
</dbReference>
<dbReference type="Gene3D" id="2.60.40.200">
    <property type="entry name" value="Superoxide dismutase, copper/zinc binding domain"/>
    <property type="match status" value="1"/>
</dbReference>
<dbReference type="InterPro" id="IPR036423">
    <property type="entry name" value="SOD-like_Cu/Zn_dom_sf"/>
</dbReference>
<dbReference type="InterPro" id="IPR024134">
    <property type="entry name" value="SOD_Cu/Zn_/chaperone"/>
</dbReference>
<dbReference type="InterPro" id="IPR018152">
    <property type="entry name" value="SOD_Cu/Zn_BS"/>
</dbReference>
<dbReference type="InterPro" id="IPR001424">
    <property type="entry name" value="SOD_Cu_Zn_dom"/>
</dbReference>
<dbReference type="PANTHER" id="PTHR10003">
    <property type="entry name" value="SUPEROXIDE DISMUTASE CU-ZN -RELATED"/>
    <property type="match status" value="1"/>
</dbReference>
<dbReference type="Pfam" id="PF00080">
    <property type="entry name" value="Sod_Cu"/>
    <property type="match status" value="1"/>
</dbReference>
<dbReference type="PRINTS" id="PR00068">
    <property type="entry name" value="CUZNDISMTASE"/>
</dbReference>
<dbReference type="SUPFAM" id="SSF49329">
    <property type="entry name" value="Cu,Zn superoxide dismutase-like"/>
    <property type="match status" value="1"/>
</dbReference>
<dbReference type="PROSITE" id="PS00087">
    <property type="entry name" value="SOD_CU_ZN_1"/>
    <property type="match status" value="1"/>
</dbReference>
<dbReference type="PROSITE" id="PS00332">
    <property type="entry name" value="SOD_CU_ZN_2"/>
    <property type="match status" value="1"/>
</dbReference>
<organism>
    <name type="scientific">Zantedeschia aethiopica</name>
    <name type="common">White calla lily</name>
    <name type="synonym">Calla aethiopica</name>
    <dbReference type="NCBI Taxonomy" id="69721"/>
    <lineage>
        <taxon>Eukaryota</taxon>
        <taxon>Viridiplantae</taxon>
        <taxon>Streptophyta</taxon>
        <taxon>Embryophyta</taxon>
        <taxon>Tracheophyta</taxon>
        <taxon>Spermatophyta</taxon>
        <taxon>Magnoliopsida</taxon>
        <taxon>Liliopsida</taxon>
        <taxon>Araceae</taxon>
        <taxon>Philodendroideae</taxon>
        <taxon>Zantedeschieae</taxon>
        <taxon>Zantedeschia</taxon>
    </lineage>
</organism>
<gene>
    <name type="primary">SODCC</name>
    <name type="synonym">SOD3</name>
</gene>
<protein>
    <recommendedName>
        <fullName>Superoxide dismutase [Cu-Zn]</fullName>
        <ecNumber>1.15.1.1</ecNumber>
    </recommendedName>
</protein>
<name>SODC_ZANAE</name>
<reference key="1">
    <citation type="submission" date="1998-03" db="EMBL/GenBank/DDBJ databases">
        <title>Expression of cytosolic Cu/Zn-superoxide dismutase during senescence and regreening of Zantedeschia aethiopica spathe.</title>
        <authorList>
            <person name="Lino-Neto T."/>
            <person name="Tavares R.M."/>
            <person name="Palme K."/>
            <person name="Pais M.S.S."/>
        </authorList>
    </citation>
    <scope>NUCLEOTIDE SEQUENCE [MRNA]</scope>
    <source>
        <tissue>Leaf</tissue>
    </source>
</reference>